<evidence type="ECO:0000250" key="1"/>
<evidence type="ECO:0000255" key="2">
    <source>
        <dbReference type="PROSITE-ProRule" id="PRU00159"/>
    </source>
</evidence>
<evidence type="ECO:0000255" key="3">
    <source>
        <dbReference type="PROSITE-ProRule" id="PRU10027"/>
    </source>
</evidence>
<evidence type="ECO:0000256" key="4">
    <source>
        <dbReference type="SAM" id="MobiDB-lite"/>
    </source>
</evidence>
<evidence type="ECO:0000305" key="5"/>
<proteinExistence type="evidence at protein level"/>
<gene>
    <name type="primary">map2k1</name>
</gene>
<sequence>MPKKKPTPIQLNPNPEGTAVNGTPTAETNLEALQKKLEELELDEQQRKRLEAFLTQKQKVGELKDDDFEKVSELGAGNGGVVFKVSHKPTSLIMARKLIHLEIKPAIRNQIIRELQVLHECNSPYIVGFYGAFYSDGEISICMEHMDGGSLDQVLKKAGKIPEKILGKVSIAVIKGLTYLREKHKIMHRDVKPSNILVNSRGEIKLCDFGVSGQLIDSMANSFVGTRSYMSPERLQGTHYSVQSDIWSMGLSLVEMAIGRYPIPPPDAKELELIFGCSVERDPASSELAPRPRPPGRPISSYGPDSRPPMAIFELLDYIVNEPPPKLPSGVFGAEFQDFVNKCLVKNPAERADLKQLMVHSFIKQSELEEVDFAGWLCSTMGLKQPSTPTHAAGV</sequence>
<name>MP2K1_XENLA</name>
<reference key="1">
    <citation type="journal article" date="1993" name="EMBO J.">
        <title>cDNA cloning of MAP kinase kinase reveals kinase cascade pathways in yeasts to vertebrates.</title>
        <authorList>
            <person name="Kosako H."/>
            <person name="Nishida E."/>
            <person name="Gotoh Y."/>
        </authorList>
    </citation>
    <scope>NUCLEOTIDE SEQUENCE [MRNA]</scope>
    <scope>PARTIAL PROTEIN SEQUENCE</scope>
</reference>
<reference key="2">
    <citation type="submission" date="2003-01" db="EMBL/GenBank/DDBJ databases">
        <authorList>
            <consortium name="NIH - Xenopus Gene Collection (XGC) project"/>
        </authorList>
    </citation>
    <scope>NUCLEOTIDE SEQUENCE [LARGE SCALE MRNA]</scope>
    <source>
        <tissue>Embryo</tissue>
    </source>
</reference>
<keyword id="KW-0067">ATP-binding</keyword>
<keyword id="KW-0963">Cytoplasm</keyword>
<keyword id="KW-0206">Cytoskeleton</keyword>
<keyword id="KW-0903">Direct protein sequencing</keyword>
<keyword id="KW-0418">Kinase</keyword>
<keyword id="KW-0547">Nucleotide-binding</keyword>
<keyword id="KW-0539">Nucleus</keyword>
<keyword id="KW-0597">Phosphoprotein</keyword>
<keyword id="KW-1185">Reference proteome</keyword>
<keyword id="KW-0723">Serine/threonine-protein kinase</keyword>
<keyword id="KW-0808">Transferase</keyword>
<keyword id="KW-0829">Tyrosine-protein kinase</keyword>
<dbReference type="EC" id="2.7.12.2"/>
<dbReference type="EMBL" id="D13700">
    <property type="protein sequence ID" value="BAA02860.1"/>
    <property type="molecule type" value="mRNA"/>
</dbReference>
<dbReference type="EMBL" id="BC043913">
    <property type="protein sequence ID" value="AAH43913.1"/>
    <property type="molecule type" value="mRNA"/>
</dbReference>
<dbReference type="PIR" id="S36186">
    <property type="entry name" value="S36186"/>
</dbReference>
<dbReference type="RefSeq" id="NP_001080299.1">
    <property type="nucleotide sequence ID" value="NM_001086830.1"/>
</dbReference>
<dbReference type="SMR" id="Q05116"/>
<dbReference type="BioGRID" id="98233">
    <property type="interactions" value="7"/>
</dbReference>
<dbReference type="ELM" id="Q05116"/>
<dbReference type="MINT" id="Q05116"/>
<dbReference type="DNASU" id="379991"/>
<dbReference type="GeneID" id="379991"/>
<dbReference type="KEGG" id="xla:379991"/>
<dbReference type="AGR" id="Xenbase:XB-GENE-865216"/>
<dbReference type="CTD" id="379991"/>
<dbReference type="Xenbase" id="XB-GENE-865216">
    <property type="gene designation" value="map2k1.L"/>
</dbReference>
<dbReference type="OMA" id="VGTMYFM"/>
<dbReference type="OrthoDB" id="10252354at2759"/>
<dbReference type="BRENDA" id="2.7.12.2">
    <property type="organism ID" value="6725"/>
</dbReference>
<dbReference type="CD-CODE" id="78E86D56">
    <property type="entry name" value="Mitochondrial cloud"/>
</dbReference>
<dbReference type="Proteomes" id="UP000186698">
    <property type="component" value="Chromosome 3L"/>
</dbReference>
<dbReference type="Bgee" id="379991">
    <property type="expression patterns" value="Expressed in brain and 19 other cell types or tissues"/>
</dbReference>
<dbReference type="GO" id="GO:0005813">
    <property type="term" value="C:centrosome"/>
    <property type="evidence" value="ECO:0007669"/>
    <property type="project" value="UniProtKB-SubCell"/>
</dbReference>
<dbReference type="GO" id="GO:0005769">
    <property type="term" value="C:early endosome"/>
    <property type="evidence" value="ECO:0007669"/>
    <property type="project" value="UniProtKB-ARBA"/>
</dbReference>
<dbReference type="GO" id="GO:0005925">
    <property type="term" value="C:focal adhesion"/>
    <property type="evidence" value="ECO:0007669"/>
    <property type="project" value="UniProtKB-ARBA"/>
</dbReference>
<dbReference type="GO" id="GO:0005770">
    <property type="term" value="C:late endosome"/>
    <property type="evidence" value="ECO:0007669"/>
    <property type="project" value="UniProtKB-ARBA"/>
</dbReference>
<dbReference type="GO" id="GO:0005739">
    <property type="term" value="C:mitochondrion"/>
    <property type="evidence" value="ECO:0007669"/>
    <property type="project" value="UniProtKB-ARBA"/>
</dbReference>
<dbReference type="GO" id="GO:0005634">
    <property type="term" value="C:nucleus"/>
    <property type="evidence" value="ECO:0007669"/>
    <property type="project" value="UniProtKB-SubCell"/>
</dbReference>
<dbReference type="GO" id="GO:0005524">
    <property type="term" value="F:ATP binding"/>
    <property type="evidence" value="ECO:0007669"/>
    <property type="project" value="UniProtKB-KW"/>
</dbReference>
<dbReference type="GO" id="GO:0004708">
    <property type="term" value="F:MAP kinase kinase activity"/>
    <property type="evidence" value="ECO:0000318"/>
    <property type="project" value="GO_Central"/>
</dbReference>
<dbReference type="GO" id="GO:0106310">
    <property type="term" value="F:protein serine kinase activity"/>
    <property type="evidence" value="ECO:0007669"/>
    <property type="project" value="RHEA"/>
</dbReference>
<dbReference type="GO" id="GO:0004674">
    <property type="term" value="F:protein serine/threonine kinase activity"/>
    <property type="evidence" value="ECO:0007669"/>
    <property type="project" value="UniProtKB-KW"/>
</dbReference>
<dbReference type="GO" id="GO:0004713">
    <property type="term" value="F:protein tyrosine kinase activity"/>
    <property type="evidence" value="ECO:0007669"/>
    <property type="project" value="UniProtKB-KW"/>
</dbReference>
<dbReference type="GO" id="GO:0000165">
    <property type="term" value="P:MAPK cascade"/>
    <property type="evidence" value="ECO:0000318"/>
    <property type="project" value="GO_Central"/>
</dbReference>
<dbReference type="GO" id="GO:2000641">
    <property type="term" value="P:regulation of early endosome to late endosome transport"/>
    <property type="evidence" value="ECO:0007669"/>
    <property type="project" value="UniProtKB-ARBA"/>
</dbReference>
<dbReference type="GO" id="GO:0090170">
    <property type="term" value="P:regulation of Golgi inheritance"/>
    <property type="evidence" value="ECO:0007669"/>
    <property type="project" value="UniProtKB-ARBA"/>
</dbReference>
<dbReference type="GO" id="GO:0032872">
    <property type="term" value="P:regulation of stress-activated MAPK cascade"/>
    <property type="evidence" value="ECO:0007669"/>
    <property type="project" value="UniProtKB-ARBA"/>
</dbReference>
<dbReference type="CDD" id="cd06650">
    <property type="entry name" value="PKc_MEK1"/>
    <property type="match status" value="1"/>
</dbReference>
<dbReference type="FunFam" id="1.10.510.10:FF:000115">
    <property type="entry name" value="Dual specificity mitogen-activated protein kinase kinase 1"/>
    <property type="match status" value="1"/>
</dbReference>
<dbReference type="FunFam" id="3.30.200.20:FF:000100">
    <property type="entry name" value="Dual specificity mitogen-activated protein kinase kinase 1"/>
    <property type="match status" value="1"/>
</dbReference>
<dbReference type="Gene3D" id="3.30.200.20">
    <property type="entry name" value="Phosphorylase Kinase, domain 1"/>
    <property type="match status" value="1"/>
</dbReference>
<dbReference type="Gene3D" id="1.10.510.10">
    <property type="entry name" value="Transferase(Phosphotransferase) domain 1"/>
    <property type="match status" value="1"/>
</dbReference>
<dbReference type="InterPro" id="IPR011009">
    <property type="entry name" value="Kinase-like_dom_sf"/>
</dbReference>
<dbReference type="InterPro" id="IPR050915">
    <property type="entry name" value="MAP_kinase_kinase"/>
</dbReference>
<dbReference type="InterPro" id="IPR000719">
    <property type="entry name" value="Prot_kinase_dom"/>
</dbReference>
<dbReference type="InterPro" id="IPR017441">
    <property type="entry name" value="Protein_kinase_ATP_BS"/>
</dbReference>
<dbReference type="InterPro" id="IPR008271">
    <property type="entry name" value="Ser/Thr_kinase_AS"/>
</dbReference>
<dbReference type="PANTHER" id="PTHR47448">
    <property type="entry name" value="DUAL SPECIFICITY MITOGEN-ACTIVATED PROTEIN KINASE KINASE DSOR1-LIKE PROTEIN"/>
    <property type="match status" value="1"/>
</dbReference>
<dbReference type="PANTHER" id="PTHR47448:SF2">
    <property type="entry name" value="MITOGEN-ACTIVATED PROTEIN KINASE KINASE 1"/>
    <property type="match status" value="1"/>
</dbReference>
<dbReference type="Pfam" id="PF00069">
    <property type="entry name" value="Pkinase"/>
    <property type="match status" value="1"/>
</dbReference>
<dbReference type="SMART" id="SM00220">
    <property type="entry name" value="S_TKc"/>
    <property type="match status" value="1"/>
</dbReference>
<dbReference type="SUPFAM" id="SSF56112">
    <property type="entry name" value="Protein kinase-like (PK-like)"/>
    <property type="match status" value="1"/>
</dbReference>
<dbReference type="PROSITE" id="PS00107">
    <property type="entry name" value="PROTEIN_KINASE_ATP"/>
    <property type="match status" value="1"/>
</dbReference>
<dbReference type="PROSITE" id="PS50011">
    <property type="entry name" value="PROTEIN_KINASE_DOM"/>
    <property type="match status" value="1"/>
</dbReference>
<dbReference type="PROSITE" id="PS00108">
    <property type="entry name" value="PROTEIN_KINASE_ST"/>
    <property type="match status" value="1"/>
</dbReference>
<comment type="function">
    <text evidence="1">Dual specificity protein kinase which acts as an essential component of the MAP kinase signal transduction pathway. Binding of extracellular ligands such as growth factors, cytokines and hormones to their cell-surface receptors activates the MAPK/ERK cascade, ultimately leading to phosphorylation of a threonine and a tyrosine residue in a Thr-Glu-Tyr sequence located in MAP kinases. Depending on the cellular context, this pathway mediates diverse biological functions such as cell growth, adhesion, survival and differentiation predominantly through the regulation of transcription, metabolism and cytoskeletal rearrangements (By similarity).</text>
</comment>
<comment type="catalytic activity">
    <reaction>
        <text>L-seryl-[protein] + ATP = O-phospho-L-seryl-[protein] + ADP + H(+)</text>
        <dbReference type="Rhea" id="RHEA:17989"/>
        <dbReference type="Rhea" id="RHEA-COMP:9863"/>
        <dbReference type="Rhea" id="RHEA-COMP:11604"/>
        <dbReference type="ChEBI" id="CHEBI:15378"/>
        <dbReference type="ChEBI" id="CHEBI:29999"/>
        <dbReference type="ChEBI" id="CHEBI:30616"/>
        <dbReference type="ChEBI" id="CHEBI:83421"/>
        <dbReference type="ChEBI" id="CHEBI:456216"/>
        <dbReference type="EC" id="2.7.12.2"/>
    </reaction>
</comment>
<comment type="catalytic activity">
    <reaction>
        <text>L-threonyl-[protein] + ATP = O-phospho-L-threonyl-[protein] + ADP + H(+)</text>
        <dbReference type="Rhea" id="RHEA:46608"/>
        <dbReference type="Rhea" id="RHEA-COMP:11060"/>
        <dbReference type="Rhea" id="RHEA-COMP:11605"/>
        <dbReference type="ChEBI" id="CHEBI:15378"/>
        <dbReference type="ChEBI" id="CHEBI:30013"/>
        <dbReference type="ChEBI" id="CHEBI:30616"/>
        <dbReference type="ChEBI" id="CHEBI:61977"/>
        <dbReference type="ChEBI" id="CHEBI:456216"/>
        <dbReference type="EC" id="2.7.12.2"/>
    </reaction>
</comment>
<comment type="catalytic activity">
    <reaction>
        <text>L-tyrosyl-[protein] + ATP = O-phospho-L-tyrosyl-[protein] + ADP + H(+)</text>
        <dbReference type="Rhea" id="RHEA:10596"/>
        <dbReference type="Rhea" id="RHEA-COMP:10136"/>
        <dbReference type="Rhea" id="RHEA-COMP:20101"/>
        <dbReference type="ChEBI" id="CHEBI:15378"/>
        <dbReference type="ChEBI" id="CHEBI:30616"/>
        <dbReference type="ChEBI" id="CHEBI:46858"/>
        <dbReference type="ChEBI" id="CHEBI:61978"/>
        <dbReference type="ChEBI" id="CHEBI:456216"/>
        <dbReference type="EC" id="2.7.12.2"/>
    </reaction>
</comment>
<comment type="subcellular location">
    <subcellularLocation>
        <location evidence="1">Cytoplasm</location>
        <location evidence="1">Cytoskeleton</location>
        <location evidence="1">Microtubule organizing center</location>
        <location evidence="1">Centrosome</location>
    </subcellularLocation>
    <subcellularLocation>
        <location evidence="1">Cytoplasm</location>
        <location evidence="1">Cytoskeleton</location>
        <location evidence="1">Microtubule organizing center</location>
        <location evidence="1">Spindle pole body</location>
    </subcellularLocation>
    <subcellularLocation>
        <location evidence="1">Cytoplasm</location>
    </subcellularLocation>
    <subcellularLocation>
        <location evidence="1">Nucleus</location>
    </subcellularLocation>
</comment>
<comment type="tissue specificity">
    <text>Expressed in the central nervous system, kidney, liver, intestine and the hematopoietic system.</text>
</comment>
<comment type="PTM">
    <text>Activated by phosphorylation on Ser/Thr catalyzed by MAP kinase kinase kinases (RAF or MOS).</text>
</comment>
<comment type="similarity">
    <text evidence="5">Belongs to the protein kinase superfamily. STE Ser/Thr protein kinase family. MAP kinase kinase subfamily.</text>
</comment>
<accession>Q05116</accession>
<accession>Q5D0B8</accession>
<protein>
    <recommendedName>
        <fullName>Dual specificity mitogen-activated protein kinase kinase 1</fullName>
        <shortName>MAP kinase kinase 1</shortName>
        <shortName>MAPKK 1</shortName>
        <ecNumber>2.7.12.2</ecNumber>
    </recommendedName>
    <alternativeName>
        <fullName>ERK activator kinase 1</fullName>
    </alternativeName>
    <alternativeName>
        <fullName>MAPK/ERK kinase 1</fullName>
        <shortName>MEK1</shortName>
    </alternativeName>
</protein>
<organism>
    <name type="scientific">Xenopus laevis</name>
    <name type="common">African clawed frog</name>
    <dbReference type="NCBI Taxonomy" id="8355"/>
    <lineage>
        <taxon>Eukaryota</taxon>
        <taxon>Metazoa</taxon>
        <taxon>Chordata</taxon>
        <taxon>Craniata</taxon>
        <taxon>Vertebrata</taxon>
        <taxon>Euteleostomi</taxon>
        <taxon>Amphibia</taxon>
        <taxon>Batrachia</taxon>
        <taxon>Anura</taxon>
        <taxon>Pipoidea</taxon>
        <taxon>Pipidae</taxon>
        <taxon>Xenopodinae</taxon>
        <taxon>Xenopus</taxon>
        <taxon>Xenopus</taxon>
    </lineage>
</organism>
<feature type="initiator methionine" description="Removed">
    <location>
        <position position="1"/>
    </location>
</feature>
<feature type="chain" id="PRO_0000086371" description="Dual specificity mitogen-activated protein kinase kinase 1">
    <location>
        <begin position="2"/>
        <end position="395"/>
    </location>
</feature>
<feature type="domain" description="Protein kinase" evidence="2">
    <location>
        <begin position="68"/>
        <end position="363"/>
    </location>
</feature>
<feature type="region of interest" description="Disordered" evidence="4">
    <location>
        <begin position="1"/>
        <end position="24"/>
    </location>
</feature>
<feature type="region of interest" description="Disordered" evidence="4">
    <location>
        <begin position="284"/>
        <end position="305"/>
    </location>
</feature>
<feature type="compositionally biased region" description="Polar residues" evidence="4">
    <location>
        <begin position="9"/>
        <end position="24"/>
    </location>
</feature>
<feature type="active site" description="Proton acceptor" evidence="2 3">
    <location>
        <position position="190"/>
    </location>
</feature>
<feature type="binding site" evidence="2">
    <location>
        <begin position="74"/>
        <end position="82"/>
    </location>
    <ligand>
        <name>ATP</name>
        <dbReference type="ChEBI" id="CHEBI:30616"/>
    </ligand>
</feature>
<feature type="binding site" evidence="2">
    <location>
        <position position="97"/>
    </location>
    <ligand>
        <name>ATP</name>
        <dbReference type="ChEBI" id="CHEBI:30616"/>
    </ligand>
</feature>
<feature type="modified residue" description="Phosphoserine; by RAF" evidence="1">
    <location>
        <position position="218"/>
    </location>
</feature>
<feature type="modified residue" description="Phosphoserine; by RAF" evidence="1">
    <location>
        <position position="222"/>
    </location>
</feature>